<gene>
    <name type="ordered locus">Pmen_2301</name>
</gene>
<reference key="1">
    <citation type="submission" date="2007-04" db="EMBL/GenBank/DDBJ databases">
        <title>Complete sequence of Pseudomonas mendocina ymp.</title>
        <authorList>
            <consortium name="US DOE Joint Genome Institute"/>
            <person name="Copeland A."/>
            <person name="Lucas S."/>
            <person name="Lapidus A."/>
            <person name="Barry K."/>
            <person name="Glavina del Rio T."/>
            <person name="Dalin E."/>
            <person name="Tice H."/>
            <person name="Pitluck S."/>
            <person name="Kiss H."/>
            <person name="Brettin T."/>
            <person name="Detter J.C."/>
            <person name="Bruce D."/>
            <person name="Han C."/>
            <person name="Schmutz J."/>
            <person name="Larimer F."/>
            <person name="Land M."/>
            <person name="Hauser L."/>
            <person name="Kyrpides N."/>
            <person name="Mikhailova N."/>
            <person name="Hersman L."/>
            <person name="Dubois J."/>
            <person name="Maurice P."/>
            <person name="Richardson P."/>
        </authorList>
    </citation>
    <scope>NUCLEOTIDE SEQUENCE [LARGE SCALE GENOMIC DNA]</scope>
    <source>
        <strain>ymp</strain>
    </source>
</reference>
<organism>
    <name type="scientific">Ectopseudomonas mendocina (strain ymp)</name>
    <name type="common">Pseudomonas mendocina</name>
    <dbReference type="NCBI Taxonomy" id="399739"/>
    <lineage>
        <taxon>Bacteria</taxon>
        <taxon>Pseudomonadati</taxon>
        <taxon>Pseudomonadota</taxon>
        <taxon>Gammaproteobacteria</taxon>
        <taxon>Pseudomonadales</taxon>
        <taxon>Pseudomonadaceae</taxon>
        <taxon>Ectopseudomonas</taxon>
    </lineage>
</organism>
<feature type="chain" id="PRO_0000337700" description="Putative glutamate--cysteine ligase 2">
    <location>
        <begin position="1"/>
        <end position="378"/>
    </location>
</feature>
<dbReference type="EC" id="6.3.2.2" evidence="1"/>
<dbReference type="EMBL" id="CP000680">
    <property type="protein sequence ID" value="ABP85059.1"/>
    <property type="molecule type" value="Genomic_DNA"/>
</dbReference>
<dbReference type="SMR" id="A4XUP3"/>
<dbReference type="STRING" id="399739.Pmen_2301"/>
<dbReference type="KEGG" id="pmy:Pmen_2301"/>
<dbReference type="PATRIC" id="fig|399739.8.peg.2323"/>
<dbReference type="eggNOG" id="COG2170">
    <property type="taxonomic scope" value="Bacteria"/>
</dbReference>
<dbReference type="HOGENOM" id="CLU_044848_0_1_6"/>
<dbReference type="OrthoDB" id="9769628at2"/>
<dbReference type="GO" id="GO:0005524">
    <property type="term" value="F:ATP binding"/>
    <property type="evidence" value="ECO:0007669"/>
    <property type="project" value="UniProtKB-KW"/>
</dbReference>
<dbReference type="GO" id="GO:0004357">
    <property type="term" value="F:glutamate-cysteine ligase activity"/>
    <property type="evidence" value="ECO:0007669"/>
    <property type="project" value="UniProtKB-EC"/>
</dbReference>
<dbReference type="GO" id="GO:0042398">
    <property type="term" value="P:modified amino acid biosynthetic process"/>
    <property type="evidence" value="ECO:0007669"/>
    <property type="project" value="InterPro"/>
</dbReference>
<dbReference type="Gene3D" id="3.30.590.20">
    <property type="match status" value="1"/>
</dbReference>
<dbReference type="HAMAP" id="MF_01609">
    <property type="entry name" value="Glu_cys_ligase_2"/>
    <property type="match status" value="1"/>
</dbReference>
<dbReference type="InterPro" id="IPR050141">
    <property type="entry name" value="GCL_type2/YbdK_subfam"/>
</dbReference>
<dbReference type="InterPro" id="IPR006336">
    <property type="entry name" value="GCS2"/>
</dbReference>
<dbReference type="InterPro" id="IPR014746">
    <property type="entry name" value="Gln_synth/guanido_kin_cat_dom"/>
</dbReference>
<dbReference type="InterPro" id="IPR011793">
    <property type="entry name" value="YbdK"/>
</dbReference>
<dbReference type="NCBIfam" id="TIGR02050">
    <property type="entry name" value="gshA_cyan_rel"/>
    <property type="match status" value="1"/>
</dbReference>
<dbReference type="NCBIfam" id="NF010039">
    <property type="entry name" value="PRK13515.1"/>
    <property type="match status" value="1"/>
</dbReference>
<dbReference type="PANTHER" id="PTHR36510">
    <property type="entry name" value="GLUTAMATE--CYSTEINE LIGASE 2-RELATED"/>
    <property type="match status" value="1"/>
</dbReference>
<dbReference type="PANTHER" id="PTHR36510:SF1">
    <property type="entry name" value="GLUTAMATE--CYSTEINE LIGASE 2-RELATED"/>
    <property type="match status" value="1"/>
</dbReference>
<dbReference type="Pfam" id="PF04107">
    <property type="entry name" value="GCS2"/>
    <property type="match status" value="1"/>
</dbReference>
<dbReference type="SUPFAM" id="SSF55931">
    <property type="entry name" value="Glutamine synthetase/guanido kinase"/>
    <property type="match status" value="1"/>
</dbReference>
<evidence type="ECO:0000255" key="1">
    <source>
        <dbReference type="HAMAP-Rule" id="MF_01609"/>
    </source>
</evidence>
<proteinExistence type="inferred from homology"/>
<comment type="function">
    <text evidence="1">ATP-dependent carboxylate-amine ligase which exhibits weak glutamate--cysteine ligase activity.</text>
</comment>
<comment type="catalytic activity">
    <reaction evidence="1">
        <text>L-cysteine + L-glutamate + ATP = gamma-L-glutamyl-L-cysteine + ADP + phosphate + H(+)</text>
        <dbReference type="Rhea" id="RHEA:13285"/>
        <dbReference type="ChEBI" id="CHEBI:15378"/>
        <dbReference type="ChEBI" id="CHEBI:29985"/>
        <dbReference type="ChEBI" id="CHEBI:30616"/>
        <dbReference type="ChEBI" id="CHEBI:35235"/>
        <dbReference type="ChEBI" id="CHEBI:43474"/>
        <dbReference type="ChEBI" id="CHEBI:58173"/>
        <dbReference type="ChEBI" id="CHEBI:456216"/>
        <dbReference type="EC" id="6.3.2.2"/>
    </reaction>
</comment>
<comment type="similarity">
    <text evidence="1">Belongs to the glutamate--cysteine ligase type 2 family. YbdK subfamily.</text>
</comment>
<keyword id="KW-0067">ATP-binding</keyword>
<keyword id="KW-0436">Ligase</keyword>
<keyword id="KW-0547">Nucleotide-binding</keyword>
<sequence length="378" mass="42893">MTQSTFGIEEEYFLTDLTSRQVARRNVEAFATACQYELGERVTREMFAAQFEVVTPVLHSLTDARQCLEGARRALARLAREFDCGVLAAGTHPLGQWRRVRATDMPRYRAIFDDYRMVASRSVLAGLHVHVGVAEGVDRIRLMNRLTPWLPLLLGLSASSPFWNGRPSGLMSYRQAVCDEWPRMGIPDHFADEAEYQRYVQVMTDTGCIRSAANLWWNIRPSLRYPTLELRIADACPRLDDALCLAGLFRAMVEHVQLTPHHAWCDDPLTRVLTLENRWRAKRQGLRGLFIEPASQRLLTFATWLEEVLERIAIQVPASDRWILEHARNLALHGGSAEAQLAEYRGARANGLEHGEALHQVVDSLMAQTELHPSQQLA</sequence>
<accession>A4XUP3</accession>
<name>GCS2_ECTM1</name>
<protein>
    <recommendedName>
        <fullName evidence="1">Putative glutamate--cysteine ligase 2</fullName>
        <ecNumber evidence="1">6.3.2.2</ecNumber>
    </recommendedName>
    <alternativeName>
        <fullName evidence="1">Gamma-glutamylcysteine synthetase 2</fullName>
        <shortName evidence="1">GCS 2</shortName>
        <shortName evidence="1">Gamma-GCS 2</shortName>
    </alternativeName>
</protein>